<organism>
    <name type="scientific">Gallid herpesvirus 2 (strain Chicken/Md5/ATCC VR-987)</name>
    <name type="common">GaHV-2</name>
    <name type="synonym">Marek's disease herpesvirus type 1</name>
    <dbReference type="NCBI Taxonomy" id="10389"/>
    <lineage>
        <taxon>Viruses</taxon>
        <taxon>Duplodnaviria</taxon>
        <taxon>Heunggongvirae</taxon>
        <taxon>Peploviricota</taxon>
        <taxon>Herviviricetes</taxon>
        <taxon>Herpesvirales</taxon>
        <taxon>Orthoherpesviridae</taxon>
        <taxon>Alphaherpesvirinae</taxon>
        <taxon>Mardivirus</taxon>
        <taxon>Mardivirus gallidalpha2</taxon>
        <taxon>Gallid alphaherpesvirus 2</taxon>
    </lineage>
</organism>
<keyword id="KW-1048">Host nucleus</keyword>
<keyword id="KW-1185">Reference proteome</keyword>
<proteinExistence type="inferred from homology"/>
<gene>
    <name type="primary">MDV016</name>
</gene>
<organismHost>
    <name type="scientific">Gallus gallus</name>
    <name type="common">Chicken</name>
    <dbReference type="NCBI Taxonomy" id="9031"/>
</organismHost>
<feature type="chain" id="PRO_0000406561" description="Nuclear protein UL4 homolog">
    <location>
        <begin position="1"/>
        <end position="268"/>
    </location>
</feature>
<reference key="1">
    <citation type="journal article" date="2000" name="J. Virol.">
        <title>The genome of a very virulent Marek's disease virus.</title>
        <authorList>
            <person name="Tulman E.R."/>
            <person name="Afonso C.L."/>
            <person name="Lu Z."/>
            <person name="Zsak L."/>
            <person name="Rock D.L."/>
            <person name="Kutish G.F."/>
        </authorList>
    </citation>
    <scope>NUCLEOTIDE SEQUENCE [LARGE SCALE GENOMIC DNA]</scope>
</reference>
<dbReference type="EMBL" id="AF243438">
    <property type="protein sequence ID" value="AAG14196.1"/>
    <property type="molecule type" value="Genomic_DNA"/>
</dbReference>
<dbReference type="RefSeq" id="YP_001033932.1">
    <property type="nucleotide sequence ID" value="NC_002229.3"/>
</dbReference>
<dbReference type="GeneID" id="4811477"/>
<dbReference type="KEGG" id="vg:4811477"/>
<dbReference type="Proteomes" id="UP000008072">
    <property type="component" value="Segment"/>
</dbReference>
<dbReference type="GO" id="GO:0042025">
    <property type="term" value="C:host cell nucleus"/>
    <property type="evidence" value="ECO:0007669"/>
    <property type="project" value="UniProtKB-SubCell"/>
</dbReference>
<dbReference type="InterPro" id="IPR004958">
    <property type="entry name" value="Herpes_UL4"/>
</dbReference>
<dbReference type="Pfam" id="PF03277">
    <property type="entry name" value="Herpes_UL4"/>
    <property type="match status" value="1"/>
</dbReference>
<accession>Q77MS6</accession>
<evidence type="ECO:0000250" key="1"/>
<evidence type="ECO:0000305" key="2"/>
<name>UL4_GAHVM</name>
<protein>
    <recommendedName>
        <fullName>Nuclear protein UL4 homolog</fullName>
    </recommendedName>
</protein>
<comment type="subcellular location">
    <subcellularLocation>
        <location evidence="1">Host nucleus</location>
    </subcellularLocation>
</comment>
<comment type="similarity">
    <text evidence="2">Belongs to the alphaherpesvirinae HHV-1 UL4 family.</text>
</comment>
<sequence length="268" mass="29498">MGSTFIAYTLENIKASPAWTMPPYEQIICSCEAGTRSIAVGKLSRCDHIPSSNFIIQRGPVGTLIVVDSGTDICSYLLRADESGSEYHTTSLSSLPESLCVIPFTTCTVMGTDAYVYNNSGGVLTIMWMGSSIYMTITIYGRHDTFAKTVDNLHLVQNCSRQFYPTVVAEPRKDDPQQNSEAAQVLSKSVPGFIEYVGANPTDTLHEHTPPILDKFPHISGEDILIEALREADLRMEDSQCSPVNYPSPMPYGFTEDSCLLESVKIYP</sequence>